<gene>
    <name evidence="1" type="primary">dapA</name>
    <name type="ordered locus">Cvib_1403</name>
</gene>
<accession>A4SG05</accession>
<name>DAPA_CHLPM</name>
<proteinExistence type="inferred from homology"/>
<keyword id="KW-0028">Amino-acid biosynthesis</keyword>
<keyword id="KW-0963">Cytoplasm</keyword>
<keyword id="KW-0220">Diaminopimelate biosynthesis</keyword>
<keyword id="KW-0456">Lyase</keyword>
<keyword id="KW-0457">Lysine biosynthesis</keyword>
<keyword id="KW-0704">Schiff base</keyword>
<comment type="function">
    <text evidence="1">Catalyzes the condensation of (S)-aspartate-beta-semialdehyde [(S)-ASA] and pyruvate to 4-hydroxy-tetrahydrodipicolinate (HTPA).</text>
</comment>
<comment type="catalytic activity">
    <reaction evidence="1">
        <text>L-aspartate 4-semialdehyde + pyruvate = (2S,4S)-4-hydroxy-2,3,4,5-tetrahydrodipicolinate + H2O + H(+)</text>
        <dbReference type="Rhea" id="RHEA:34171"/>
        <dbReference type="ChEBI" id="CHEBI:15361"/>
        <dbReference type="ChEBI" id="CHEBI:15377"/>
        <dbReference type="ChEBI" id="CHEBI:15378"/>
        <dbReference type="ChEBI" id="CHEBI:67139"/>
        <dbReference type="ChEBI" id="CHEBI:537519"/>
        <dbReference type="EC" id="4.3.3.7"/>
    </reaction>
</comment>
<comment type="pathway">
    <text evidence="1">Amino-acid biosynthesis; L-lysine biosynthesis via DAP pathway; (S)-tetrahydrodipicolinate from L-aspartate: step 3/4.</text>
</comment>
<comment type="subunit">
    <text evidence="1">Homotetramer; dimer of dimers.</text>
</comment>
<comment type="subcellular location">
    <subcellularLocation>
        <location evidence="1">Cytoplasm</location>
    </subcellularLocation>
</comment>
<comment type="similarity">
    <text evidence="1">Belongs to the DapA family.</text>
</comment>
<comment type="caution">
    <text evidence="2">Was originally thought to be a dihydrodipicolinate synthase (DHDPS), catalyzing the condensation of (S)-aspartate-beta-semialdehyde [(S)-ASA] and pyruvate to dihydrodipicolinate (DHDP). However, it was shown in E.coli that the product of the enzymatic reaction is not dihydrodipicolinate but in fact (4S)-4-hydroxy-2,3,4,5-tetrahydro-(2S)-dipicolinic acid (HTPA), and that the consecutive dehydration reaction leading to DHDP is not spontaneous but catalyzed by DapB.</text>
</comment>
<sequence length="296" mass="31762">MSNQDLKGSAVALVTPFREDFSIDTDALKQLVHFHAEAGTDIIIPCGTTGESPTLNPEEQADIIRIVRDEAKGKMLVAAGAGTNSTRSAVTLAKNAEDAGAEAILSVAPYYSKPSQEGIYQHYRHIAEAVSVPIIIYNVPGRTGCNVSAETILRLAGDFSNIAAVKEASDNFTQIADLLDGRPEHFSVLTGEDTLILPFMAMGGDGVISVAANQVPAAVKQLVDSAAAGNLEEARRISRTYRNLFRLNFIESNPAPIKCALAMMGMIKEVYRLPMTPVSEESRRQLSLEMSALGLI</sequence>
<organism>
    <name type="scientific">Chlorobium phaeovibrioides (strain DSM 265 / 1930)</name>
    <name type="common">Prosthecochloris vibrioformis (strain DSM 265)</name>
    <dbReference type="NCBI Taxonomy" id="290318"/>
    <lineage>
        <taxon>Bacteria</taxon>
        <taxon>Pseudomonadati</taxon>
        <taxon>Chlorobiota</taxon>
        <taxon>Chlorobiia</taxon>
        <taxon>Chlorobiales</taxon>
        <taxon>Chlorobiaceae</taxon>
        <taxon>Chlorobium/Pelodictyon group</taxon>
        <taxon>Chlorobium</taxon>
    </lineage>
</organism>
<evidence type="ECO:0000255" key="1">
    <source>
        <dbReference type="HAMAP-Rule" id="MF_00418"/>
    </source>
</evidence>
<evidence type="ECO:0000305" key="2"/>
<feature type="chain" id="PRO_1000080535" description="4-hydroxy-tetrahydrodipicolinate synthase">
    <location>
        <begin position="1"/>
        <end position="296"/>
    </location>
</feature>
<feature type="active site" description="Proton donor/acceptor" evidence="1">
    <location>
        <position position="137"/>
    </location>
</feature>
<feature type="active site" description="Schiff-base intermediate with substrate" evidence="1">
    <location>
        <position position="166"/>
    </location>
</feature>
<feature type="binding site" evidence="1">
    <location>
        <position position="49"/>
    </location>
    <ligand>
        <name>pyruvate</name>
        <dbReference type="ChEBI" id="CHEBI:15361"/>
    </ligand>
</feature>
<feature type="binding site" evidence="1">
    <location>
        <position position="208"/>
    </location>
    <ligand>
        <name>pyruvate</name>
        <dbReference type="ChEBI" id="CHEBI:15361"/>
    </ligand>
</feature>
<feature type="site" description="Part of a proton relay during catalysis" evidence="1">
    <location>
        <position position="48"/>
    </location>
</feature>
<feature type="site" description="Part of a proton relay during catalysis" evidence="1">
    <location>
        <position position="111"/>
    </location>
</feature>
<dbReference type="EC" id="4.3.3.7" evidence="1"/>
<dbReference type="EMBL" id="CP000607">
    <property type="protein sequence ID" value="ABP37414.1"/>
    <property type="molecule type" value="Genomic_DNA"/>
</dbReference>
<dbReference type="SMR" id="A4SG05"/>
<dbReference type="STRING" id="290318.Cvib_1403"/>
<dbReference type="KEGG" id="pvi:Cvib_1403"/>
<dbReference type="eggNOG" id="COG0329">
    <property type="taxonomic scope" value="Bacteria"/>
</dbReference>
<dbReference type="HOGENOM" id="CLU_049343_7_1_10"/>
<dbReference type="OrthoDB" id="9782828at2"/>
<dbReference type="UniPathway" id="UPA00034">
    <property type="reaction ID" value="UER00017"/>
</dbReference>
<dbReference type="GO" id="GO:0005829">
    <property type="term" value="C:cytosol"/>
    <property type="evidence" value="ECO:0007669"/>
    <property type="project" value="TreeGrafter"/>
</dbReference>
<dbReference type="GO" id="GO:0008840">
    <property type="term" value="F:4-hydroxy-tetrahydrodipicolinate synthase activity"/>
    <property type="evidence" value="ECO:0007669"/>
    <property type="project" value="UniProtKB-UniRule"/>
</dbReference>
<dbReference type="GO" id="GO:0019877">
    <property type="term" value="P:diaminopimelate biosynthetic process"/>
    <property type="evidence" value="ECO:0007669"/>
    <property type="project" value="UniProtKB-UniRule"/>
</dbReference>
<dbReference type="GO" id="GO:0009089">
    <property type="term" value="P:lysine biosynthetic process via diaminopimelate"/>
    <property type="evidence" value="ECO:0007669"/>
    <property type="project" value="UniProtKB-UniRule"/>
</dbReference>
<dbReference type="CDD" id="cd00950">
    <property type="entry name" value="DHDPS"/>
    <property type="match status" value="1"/>
</dbReference>
<dbReference type="Gene3D" id="3.20.20.70">
    <property type="entry name" value="Aldolase class I"/>
    <property type="match status" value="1"/>
</dbReference>
<dbReference type="HAMAP" id="MF_00418">
    <property type="entry name" value="DapA"/>
    <property type="match status" value="1"/>
</dbReference>
<dbReference type="InterPro" id="IPR013785">
    <property type="entry name" value="Aldolase_TIM"/>
</dbReference>
<dbReference type="InterPro" id="IPR005263">
    <property type="entry name" value="DapA"/>
</dbReference>
<dbReference type="InterPro" id="IPR002220">
    <property type="entry name" value="DapA-like"/>
</dbReference>
<dbReference type="InterPro" id="IPR020625">
    <property type="entry name" value="Schiff_base-form_aldolases_AS"/>
</dbReference>
<dbReference type="NCBIfam" id="TIGR00674">
    <property type="entry name" value="dapA"/>
    <property type="match status" value="1"/>
</dbReference>
<dbReference type="PANTHER" id="PTHR12128:SF66">
    <property type="entry name" value="4-HYDROXY-2-OXOGLUTARATE ALDOLASE, MITOCHONDRIAL"/>
    <property type="match status" value="1"/>
</dbReference>
<dbReference type="PANTHER" id="PTHR12128">
    <property type="entry name" value="DIHYDRODIPICOLINATE SYNTHASE"/>
    <property type="match status" value="1"/>
</dbReference>
<dbReference type="Pfam" id="PF00701">
    <property type="entry name" value="DHDPS"/>
    <property type="match status" value="1"/>
</dbReference>
<dbReference type="PIRSF" id="PIRSF001365">
    <property type="entry name" value="DHDPS"/>
    <property type="match status" value="1"/>
</dbReference>
<dbReference type="PRINTS" id="PR00146">
    <property type="entry name" value="DHPICSNTHASE"/>
</dbReference>
<dbReference type="SMART" id="SM01130">
    <property type="entry name" value="DHDPS"/>
    <property type="match status" value="1"/>
</dbReference>
<dbReference type="SUPFAM" id="SSF51569">
    <property type="entry name" value="Aldolase"/>
    <property type="match status" value="1"/>
</dbReference>
<dbReference type="PROSITE" id="PS00666">
    <property type="entry name" value="DHDPS_2"/>
    <property type="match status" value="1"/>
</dbReference>
<reference key="1">
    <citation type="submission" date="2007-03" db="EMBL/GenBank/DDBJ databases">
        <title>Complete sequence of Prosthecochloris vibrioformis DSM 265.</title>
        <authorList>
            <consortium name="US DOE Joint Genome Institute"/>
            <person name="Copeland A."/>
            <person name="Lucas S."/>
            <person name="Lapidus A."/>
            <person name="Barry K."/>
            <person name="Detter J.C."/>
            <person name="Glavina del Rio T."/>
            <person name="Hammon N."/>
            <person name="Israni S."/>
            <person name="Pitluck S."/>
            <person name="Schmutz J."/>
            <person name="Larimer F."/>
            <person name="Land M."/>
            <person name="Hauser L."/>
            <person name="Mikhailova N."/>
            <person name="Li T."/>
            <person name="Overmann J."/>
            <person name="Schuster S.C."/>
            <person name="Bryant D.A."/>
            <person name="Richardson P."/>
        </authorList>
    </citation>
    <scope>NUCLEOTIDE SEQUENCE [LARGE SCALE GENOMIC DNA]</scope>
    <source>
        <strain>DSM 265 / 1930</strain>
    </source>
</reference>
<protein>
    <recommendedName>
        <fullName evidence="1">4-hydroxy-tetrahydrodipicolinate synthase</fullName>
        <shortName evidence="1">HTPA synthase</shortName>
        <ecNumber evidence="1">4.3.3.7</ecNumber>
    </recommendedName>
</protein>